<keyword id="KW-0094">Blood coagulation</keyword>
<keyword id="KW-1003">Cell membrane</keyword>
<keyword id="KW-1015">Disulfide bond</keyword>
<keyword id="KW-0297">G-protein coupled receptor</keyword>
<keyword id="KW-0325">Glycoprotein</keyword>
<keyword id="KW-0356">Hemostasis</keyword>
<keyword id="KW-0472">Membrane</keyword>
<keyword id="KW-0597">Phosphoprotein</keyword>
<keyword id="KW-0675">Receptor</keyword>
<keyword id="KW-1185">Reference proteome</keyword>
<keyword id="KW-0807">Transducer</keyword>
<keyword id="KW-0812">Transmembrane</keyword>
<keyword id="KW-1133">Transmembrane helix</keyword>
<sequence length="342" mass="39480">MQAIDNLTSAPGNTSLCTRDYKITQVLFPLLYTVLFFVGLITNSLAMRIFFQIRSKSNFIIFLKNTVISDLLMILTFPFKILSDAKLGAGPLRTFVCQVTSVIFYFTMYISISFLGLITIDRYQKTTRPFKTSNPKNLLGAKILSVLIWAFMFLLSLPNMILTNRRPRDKNVKKCSFLKSEFGLVWHEIVNYICQVIFWINFLIVIVCYTLITKELYRSYVRTRGVGKVPRKKVNVKVFIIIAVFFICFVPFHFARIPYTLSQTRDVFDCAAENTLFYVKESTLWLTSLNACLDPFIYFFLCKSFRNSLISMLKCPNSATSQSQDNRKKEQDGGDPNEETPM</sequence>
<feature type="chain" id="PRO_0000070037" description="P2Y purinoceptor 12">
    <location>
        <begin position="1"/>
        <end position="342"/>
    </location>
</feature>
<feature type="topological domain" description="Extracellular" evidence="1">
    <location>
        <begin position="1"/>
        <end position="27"/>
    </location>
</feature>
<feature type="transmembrane region" description="Helical; Name=1" evidence="1">
    <location>
        <begin position="28"/>
        <end position="50"/>
    </location>
</feature>
<feature type="topological domain" description="Cytoplasmic" evidence="1">
    <location>
        <begin position="51"/>
        <end position="61"/>
    </location>
</feature>
<feature type="transmembrane region" description="Helical; Name=2" evidence="1">
    <location>
        <begin position="62"/>
        <end position="82"/>
    </location>
</feature>
<feature type="topological domain" description="Extracellular" evidence="1">
    <location>
        <begin position="83"/>
        <end position="97"/>
    </location>
</feature>
<feature type="transmembrane region" description="Helical; Name=3" evidence="1">
    <location>
        <begin position="98"/>
        <end position="118"/>
    </location>
</feature>
<feature type="topological domain" description="Cytoplasmic" evidence="1">
    <location>
        <begin position="119"/>
        <end position="142"/>
    </location>
</feature>
<feature type="transmembrane region" description="Helical; Name=4" evidence="1">
    <location>
        <begin position="143"/>
        <end position="162"/>
    </location>
</feature>
<feature type="topological domain" description="Extracellular" evidence="1">
    <location>
        <begin position="163"/>
        <end position="185"/>
    </location>
</feature>
<feature type="transmembrane region" description="Helical; Name=5" evidence="1">
    <location>
        <begin position="186"/>
        <end position="207"/>
    </location>
</feature>
<feature type="topological domain" description="Cytoplasmic" evidence="1">
    <location>
        <begin position="208"/>
        <end position="233"/>
    </location>
</feature>
<feature type="transmembrane region" description="Helical; Name=6" evidence="1">
    <location>
        <begin position="234"/>
        <end position="259"/>
    </location>
</feature>
<feature type="topological domain" description="Extracellular" evidence="1">
    <location>
        <begin position="260"/>
        <end position="278"/>
    </location>
</feature>
<feature type="transmembrane region" description="Helical; Name=7" evidence="1">
    <location>
        <begin position="279"/>
        <end position="298"/>
    </location>
</feature>
<feature type="topological domain" description="Cytoplasmic" evidence="1">
    <location>
        <begin position="299"/>
        <end position="342"/>
    </location>
</feature>
<feature type="region of interest" description="Disordered" evidence="5">
    <location>
        <begin position="317"/>
        <end position="342"/>
    </location>
</feature>
<feature type="compositionally biased region" description="Acidic residues" evidence="5">
    <location>
        <begin position="333"/>
        <end position="342"/>
    </location>
</feature>
<feature type="binding site" evidence="1">
    <location>
        <position position="93"/>
    </location>
    <ligand>
        <name>ADP</name>
        <dbReference type="ChEBI" id="CHEBI:456216"/>
    </ligand>
</feature>
<feature type="binding site" evidence="1">
    <location>
        <position position="97"/>
    </location>
    <ligand>
        <name>ADP</name>
        <dbReference type="ChEBI" id="CHEBI:456216"/>
    </ligand>
</feature>
<feature type="binding site" evidence="1">
    <location>
        <position position="105"/>
    </location>
    <ligand>
        <name>ADP</name>
        <dbReference type="ChEBI" id="CHEBI:456216"/>
    </ligand>
</feature>
<feature type="binding site" evidence="1">
    <location>
        <begin position="156"/>
        <end position="159"/>
    </location>
    <ligand>
        <name>ADP</name>
        <dbReference type="ChEBI" id="CHEBI:456216"/>
    </ligand>
</feature>
<feature type="binding site" evidence="1">
    <location>
        <begin position="175"/>
        <end position="179"/>
    </location>
    <ligand>
        <name>ADP</name>
        <dbReference type="ChEBI" id="CHEBI:456216"/>
    </ligand>
</feature>
<feature type="binding site" evidence="1">
    <location>
        <position position="187"/>
    </location>
    <ligand>
        <name>ADP</name>
        <dbReference type="ChEBI" id="CHEBI:456216"/>
    </ligand>
</feature>
<feature type="binding site" evidence="1">
    <location>
        <position position="191"/>
    </location>
    <ligand>
        <name>ADP</name>
        <dbReference type="ChEBI" id="CHEBI:456216"/>
    </ligand>
</feature>
<feature type="binding site" evidence="1">
    <location>
        <begin position="256"/>
        <end position="259"/>
    </location>
    <ligand>
        <name>ADP</name>
        <dbReference type="ChEBI" id="CHEBI:456216"/>
    </ligand>
</feature>
<feature type="binding site" evidence="1">
    <location>
        <position position="263"/>
    </location>
    <ligand>
        <name>ADP</name>
        <dbReference type="ChEBI" id="CHEBI:456216"/>
    </ligand>
</feature>
<feature type="binding site" evidence="1">
    <location>
        <position position="280"/>
    </location>
    <ligand>
        <name>ADP</name>
        <dbReference type="ChEBI" id="CHEBI:456216"/>
    </ligand>
</feature>
<feature type="modified residue" description="Phosphoserine" evidence="2">
    <location>
        <position position="55"/>
    </location>
</feature>
<feature type="modified residue" description="Phosphoserine" evidence="2">
    <location>
        <position position="57"/>
    </location>
</feature>
<feature type="glycosylation site" description="N-linked (GlcNAc...) asparagine" evidence="3">
    <location>
        <position position="6"/>
    </location>
</feature>
<feature type="glycosylation site" description="N-linked (GlcNAc...) asparagine" evidence="3">
    <location>
        <position position="13"/>
    </location>
</feature>
<feature type="disulfide bond" evidence="4">
    <location>
        <begin position="17"/>
        <end position="270"/>
    </location>
</feature>
<feature type="disulfide bond" evidence="4">
    <location>
        <begin position="97"/>
        <end position="175"/>
    </location>
</feature>
<feature type="sequence conflict" description="In Ref. 1; BAB33041." evidence="6" ref="1">
    <original>I</original>
    <variation>T</variation>
    <location>
        <position position="49"/>
    </location>
</feature>
<feature type="sequence conflict" description="In Ref. 1; BAB33041." evidence="6" ref="1">
    <original>A</original>
    <variation>T</variation>
    <location>
        <position position="89"/>
    </location>
</feature>
<name>P2Y12_MACFA</name>
<reference key="1">
    <citation type="submission" date="2001-06" db="EMBL/GenBank/DDBJ databases">
        <title>Isolation of full-length cDNA clones from macaque brain cDNA libraries.</title>
        <authorList>
            <person name="Osada N."/>
            <person name="Hida M."/>
            <person name="Kusuda J."/>
            <person name="Tanuma R."/>
            <person name="Iseki K."/>
            <person name="Hirai M."/>
            <person name="Terao K."/>
            <person name="Suzuki Y."/>
            <person name="Sugano S."/>
            <person name="Hashimoto K."/>
        </authorList>
    </citation>
    <scope>NUCLEOTIDE SEQUENCE [LARGE SCALE MRNA]</scope>
    <source>
        <tissue>Frontal cortex</tissue>
        <tissue>Medulla oblongata</tissue>
    </source>
</reference>
<protein>
    <recommendedName>
        <fullName>P2Y purinoceptor 12</fullName>
        <shortName>P2Y12</shortName>
    </recommendedName>
</protein>
<organism>
    <name type="scientific">Macaca fascicularis</name>
    <name type="common">Crab-eating macaque</name>
    <name type="synonym">Cynomolgus monkey</name>
    <dbReference type="NCBI Taxonomy" id="9541"/>
    <lineage>
        <taxon>Eukaryota</taxon>
        <taxon>Metazoa</taxon>
        <taxon>Chordata</taxon>
        <taxon>Craniata</taxon>
        <taxon>Vertebrata</taxon>
        <taxon>Euteleostomi</taxon>
        <taxon>Mammalia</taxon>
        <taxon>Eutheria</taxon>
        <taxon>Euarchontoglires</taxon>
        <taxon>Primates</taxon>
        <taxon>Haplorrhini</taxon>
        <taxon>Catarrhini</taxon>
        <taxon>Cercopithecidae</taxon>
        <taxon>Cercopithecinae</taxon>
        <taxon>Macaca</taxon>
    </lineage>
</organism>
<accession>Q95KC3</accession>
<accession>Q9BGT8</accession>
<proteinExistence type="evidence at transcript level"/>
<comment type="function">
    <text evidence="1">Receptor for ADP and ATP coupled to G-proteins that inhibit the adenylyl cyclase second messenger system. Required for normal platelet aggregation and blood coagulation (By similarity).</text>
</comment>
<comment type="subcellular location">
    <subcellularLocation>
        <location>Cell membrane</location>
        <topology>Multi-pass membrane protein</topology>
    </subcellularLocation>
</comment>
<comment type="domain">
    <text evidence="1">The transmembrane domain is composed of seven transmembrane helices; most of these are not strictly perpendicular to the plane of the membrane, but are tilted and/or kinked. Agonist binding promotes a conformation change in the extracellular loops that leads to an inward movement of the transmembrane helices. Antagonists can bind to an overlapping site, but block the inward movement of the transmembrane helices (By similarity).</text>
</comment>
<comment type="similarity">
    <text evidence="4">Belongs to the G-protein coupled receptor 1 family.</text>
</comment>
<gene>
    <name type="primary">P2RY12</name>
    <name type="ORF">QflA-10912</name>
    <name type="ORF">QmoA-10634</name>
</gene>
<dbReference type="EMBL" id="AB056385">
    <property type="protein sequence ID" value="BAB33041.1"/>
    <property type="molecule type" value="mRNA"/>
</dbReference>
<dbReference type="EMBL" id="AB062981">
    <property type="protein sequence ID" value="BAB60747.1"/>
    <property type="molecule type" value="mRNA"/>
</dbReference>
<dbReference type="SMR" id="Q95KC3"/>
<dbReference type="STRING" id="9541.ENSMFAP00000009798"/>
<dbReference type="GlyCosmos" id="Q95KC3">
    <property type="glycosylation" value="2 sites, No reported glycans"/>
</dbReference>
<dbReference type="eggNOG" id="ENOG502QUS2">
    <property type="taxonomic scope" value="Eukaryota"/>
</dbReference>
<dbReference type="Proteomes" id="UP000233100">
    <property type="component" value="Unplaced"/>
</dbReference>
<dbReference type="GO" id="GO:0016020">
    <property type="term" value="C:membrane"/>
    <property type="evidence" value="ECO:0000250"/>
    <property type="project" value="UniProtKB"/>
</dbReference>
<dbReference type="GO" id="GO:0005886">
    <property type="term" value="C:plasma membrane"/>
    <property type="evidence" value="ECO:0007669"/>
    <property type="project" value="UniProtKB-SubCell"/>
</dbReference>
<dbReference type="GO" id="GO:0001621">
    <property type="term" value="F:G protein-coupled ADP receptor activity"/>
    <property type="evidence" value="ECO:0000250"/>
    <property type="project" value="UniProtKB"/>
</dbReference>
<dbReference type="GO" id="GO:0007193">
    <property type="term" value="P:adenylate cyclase-inhibiting G protein-coupled receptor signaling pathway"/>
    <property type="evidence" value="ECO:0000250"/>
    <property type="project" value="UniProtKB"/>
</dbReference>
<dbReference type="GO" id="GO:0070527">
    <property type="term" value="P:platelet aggregation"/>
    <property type="evidence" value="ECO:0000250"/>
    <property type="project" value="UniProtKB"/>
</dbReference>
<dbReference type="CDD" id="cd15150">
    <property type="entry name" value="7tmA_P2Y12"/>
    <property type="match status" value="1"/>
</dbReference>
<dbReference type="FunFam" id="1.20.1070.10:FF:000049">
    <property type="entry name" value="G-protein coupled receptor 87"/>
    <property type="match status" value="1"/>
</dbReference>
<dbReference type="Gene3D" id="1.20.1070.10">
    <property type="entry name" value="Rhodopsin 7-helix transmembrane proteins"/>
    <property type="match status" value="1"/>
</dbReference>
<dbReference type="InterPro" id="IPR000276">
    <property type="entry name" value="GPCR_Rhodpsn"/>
</dbReference>
<dbReference type="InterPro" id="IPR017452">
    <property type="entry name" value="GPCR_Rhodpsn_7TM"/>
</dbReference>
<dbReference type="InterPro" id="IPR005394">
    <property type="entry name" value="P2Y12_rcpt"/>
</dbReference>
<dbReference type="PANTHER" id="PTHR24233:SF0">
    <property type="entry name" value="P2Y PURINOCEPTOR 12"/>
    <property type="match status" value="1"/>
</dbReference>
<dbReference type="PANTHER" id="PTHR24233">
    <property type="entry name" value="P2Y PURINOCEPTOR-RELATED G-PROTEIN COUPLED RECEPTOR"/>
    <property type="match status" value="1"/>
</dbReference>
<dbReference type="Pfam" id="PF00001">
    <property type="entry name" value="7tm_1"/>
    <property type="match status" value="1"/>
</dbReference>
<dbReference type="PRINTS" id="PR00237">
    <property type="entry name" value="GPCRRHODOPSN"/>
</dbReference>
<dbReference type="PRINTS" id="PR01569">
    <property type="entry name" value="P2Y12PRNCPTR"/>
</dbReference>
<dbReference type="PRINTS" id="PR01157">
    <property type="entry name" value="P2YPURNOCPTR"/>
</dbReference>
<dbReference type="SUPFAM" id="SSF81321">
    <property type="entry name" value="Family A G protein-coupled receptor-like"/>
    <property type="match status" value="1"/>
</dbReference>
<dbReference type="PROSITE" id="PS50262">
    <property type="entry name" value="G_PROTEIN_RECEP_F1_2"/>
    <property type="match status" value="1"/>
</dbReference>
<evidence type="ECO:0000250" key="1"/>
<evidence type="ECO:0000250" key="2">
    <source>
        <dbReference type="UniProtKB" id="Q9EPX4"/>
    </source>
</evidence>
<evidence type="ECO:0000255" key="3"/>
<evidence type="ECO:0000255" key="4">
    <source>
        <dbReference type="PROSITE-ProRule" id="PRU00521"/>
    </source>
</evidence>
<evidence type="ECO:0000256" key="5">
    <source>
        <dbReference type="SAM" id="MobiDB-lite"/>
    </source>
</evidence>
<evidence type="ECO:0000305" key="6"/>